<protein>
    <recommendedName>
        <fullName>Uncharacterized 9.2 kDa protein in rpl23-rpl2 intergenic region</fullName>
    </recommendedName>
    <alternativeName>
        <fullName>ORF76</fullName>
    </alternativeName>
</protein>
<keyword id="KW-0934">Plastid</keyword>
<accession>P34781</accession>
<proteinExistence type="predicted"/>
<name>YCX7_EUGLO</name>
<sequence length="76" mass="9160">MNRKDIKDILIKLLVIHACVTFVFAITFLMCNVEAAIILKSLSIFTKCKYFYDNIYIIFYNIFYCIKLYFINFFVF</sequence>
<reference key="1">
    <citation type="journal article" date="1994" name="Curr. Genet.">
        <title>Genes for components of the chloroplast translational apparatus are conserved in the reduced 73-kb plastid DNA of the nonphotosynthetic euglenoid flagellate Astasia longa.</title>
        <authorList>
            <person name="Gockel G."/>
            <person name="Hachtel W."/>
            <person name="Baier S."/>
            <person name="Fliss C."/>
            <person name="Henke M."/>
        </authorList>
    </citation>
    <scope>NUCLEOTIDE SEQUENCE [GENOMIC DNA]</scope>
    <source>
        <strain>CCAP 1204-17a</strain>
    </source>
</reference>
<reference key="2">
    <citation type="journal article" date="2000" name="Protist">
        <title>Complete gene map of the plastid genome of the nonphotosynthetic euglenoid flagellate Astasia longa.</title>
        <authorList>
            <person name="Gockel G."/>
            <person name="Hachtel W."/>
        </authorList>
    </citation>
    <scope>NUCLEOTIDE SEQUENCE [LARGE SCALE GENOMIC DNA]</scope>
    <source>
        <strain>CCAP 1204-17a</strain>
    </source>
</reference>
<feature type="chain" id="PRO_0000217490" description="Uncharacterized 9.2 kDa protein in rpl23-rpl2 intergenic region">
    <location>
        <begin position="1"/>
        <end position="76"/>
    </location>
</feature>
<organism>
    <name type="scientific">Euglena longa</name>
    <name type="common">Euglenophycean alga</name>
    <name type="synonym">Astasia longa</name>
    <dbReference type="NCBI Taxonomy" id="3037"/>
    <lineage>
        <taxon>Eukaryota</taxon>
        <taxon>Discoba</taxon>
        <taxon>Euglenozoa</taxon>
        <taxon>Euglenida</taxon>
        <taxon>Spirocuta</taxon>
        <taxon>Euglenophyceae</taxon>
        <taxon>Euglenales</taxon>
        <taxon>Euglenaceae</taxon>
        <taxon>Euglena</taxon>
    </lineage>
</organism>
<dbReference type="EMBL" id="AJ294725">
    <property type="protein sequence ID" value="CAC24595.1"/>
    <property type="molecule type" value="Genomic_DNA"/>
</dbReference>
<dbReference type="PIR" id="S38606">
    <property type="entry name" value="S38606"/>
</dbReference>
<dbReference type="RefSeq" id="NP_074984.1">
    <property type="nucleotide sequence ID" value="NC_002652.1"/>
</dbReference>
<dbReference type="SMR" id="P34781"/>
<dbReference type="GeneID" id="1457313"/>
<dbReference type="GO" id="GO:0009536">
    <property type="term" value="C:plastid"/>
    <property type="evidence" value="ECO:0007669"/>
    <property type="project" value="UniProtKB-SubCell"/>
</dbReference>
<geneLocation type="non-photosynthetic plastid"/>
<comment type="subcellular location">
    <subcellularLocation>
        <location>Plastid</location>
    </subcellularLocation>
</comment>